<protein>
    <recommendedName>
        <fullName evidence="5">Conotoxin TeAr151</fullName>
    </recommendedName>
    <component>
        <recommendedName>
            <fullName evidence="6">Conotoxin TeAr151 b</fullName>
        </recommendedName>
    </component>
</protein>
<feature type="signal peptide" evidence="1">
    <location>
        <begin position="1"/>
        <end position="22"/>
    </location>
</feature>
<feature type="propeptide" id="PRO_0000274094" evidence="7">
    <location>
        <begin position="23"/>
        <end position="47"/>
    </location>
</feature>
<feature type="peptide" id="PRO_0000274095" description="Conotoxin TeAr151" evidence="2">
    <location>
        <begin position="50"/>
        <end position="60"/>
    </location>
</feature>
<feature type="peptide" id="PRO_0000445114" description="Conotoxin TeAr151 b" evidence="8">
    <location>
        <begin position="51"/>
        <end position="60"/>
    </location>
</feature>
<feature type="modified residue" description="Methionine sulfoxide; partial" evidence="2">
    <location>
        <position position="55"/>
    </location>
</feature>
<feature type="modified residue" description="Serine amide" evidence="2 3 4">
    <location>
        <position position="60"/>
    </location>
</feature>
<accession>Q3YEE9</accession>
<comment type="subcellular location">
    <subcellularLocation>
        <location evidence="2">Secreted</location>
    </subcellularLocation>
</comment>
<comment type="tissue specificity">
    <text evidence="7 9">Expressed by the venom duct (PubMed:19380747, PubMed:23031820). Is mostly present in part 5 of the venom duct (distal part near the pharynx), and less abundantly present in part 4 of the venom duct (PubMed:23031820).</text>
</comment>
<comment type="domain">
    <text evidence="6">The cysteine framework is V (CC-CC).</text>
</comment>
<comment type="PTM">
    <text evidence="2">Contains 2 disulfide bonds.</text>
</comment>
<comment type="PTM">
    <text evidence="6">Contains 2 disulfide bonds that can be either 'C1-C3, C2-C4' or 'C1-C4, C2-C3', since these disulfide connectivities have been observed for conotoxins with cysteine framework V (for examples, see AC P0DQQ7 and AC P81755)..</text>
</comment>
<comment type="mass spectrometry">
    <molecule>Conotoxin TeAr151</molecule>
    <text>Without oxidation at Met-55.</text>
</comment>
<comment type="mass spectrometry">
    <molecule>Conotoxin TeAr151</molecule>
    <text>With oxidation at Met-55.</text>
</comment>
<comment type="similarity">
    <text evidence="6">Belongs to the conotoxin T superfamily.</text>
</comment>
<organism>
    <name type="scientific">Conus textile</name>
    <name type="common">Cloth-of-gold cone</name>
    <dbReference type="NCBI Taxonomy" id="6494"/>
    <lineage>
        <taxon>Eukaryota</taxon>
        <taxon>Metazoa</taxon>
        <taxon>Spiralia</taxon>
        <taxon>Lophotrochozoa</taxon>
        <taxon>Mollusca</taxon>
        <taxon>Gastropoda</taxon>
        <taxon>Caenogastropoda</taxon>
        <taxon>Neogastropoda</taxon>
        <taxon>Conoidea</taxon>
        <taxon>Conidae</taxon>
        <taxon>Conus</taxon>
        <taxon>Cylinder</taxon>
    </lineage>
</organism>
<evidence type="ECO:0000255" key="1"/>
<evidence type="ECO:0000269" key="2">
    <source>
    </source>
</evidence>
<evidence type="ECO:0000269" key="3">
    <source>
    </source>
</evidence>
<evidence type="ECO:0000269" key="4">
    <source>
    </source>
</evidence>
<evidence type="ECO:0000303" key="5">
    <source>
    </source>
</evidence>
<evidence type="ECO:0000305" key="6"/>
<evidence type="ECO:0000305" key="7">
    <source>
    </source>
</evidence>
<evidence type="ECO:0000305" key="8">
    <source>
    </source>
</evidence>
<evidence type="ECO:0000305" key="9">
    <source>
    </source>
</evidence>
<name>CT51A_CONTE</name>
<keyword id="KW-0027">Amidation</keyword>
<keyword id="KW-0165">Cleavage on pair of basic residues</keyword>
<keyword id="KW-0903">Direct protein sequencing</keyword>
<keyword id="KW-1015">Disulfide bond</keyword>
<keyword id="KW-0558">Oxidation</keyword>
<keyword id="KW-0964">Secreted</keyword>
<keyword id="KW-0732">Signal</keyword>
<keyword id="KW-0800">Toxin</keyword>
<reference key="1">
    <citation type="journal article" date="2006" name="Peptides">
        <title>Direct cDNA cloning of novel conotoxins of the T-superfamily from Conus textile.</title>
        <authorList>
            <person name="Luo S."/>
            <person name="Zhangsun D."/>
            <person name="Zhang B."/>
            <person name="Chen X."/>
            <person name="Feng J."/>
        </authorList>
    </citation>
    <scope>NUCLEOTIDE SEQUENCE [MRNA]</scope>
    <source>
        <tissue>Venom duct</tissue>
    </source>
</reference>
<reference key="2">
    <citation type="journal article" date="2009" name="Proc. Natl. Acad. Sci. U.S.A.">
        <title>Rapid sensitive analysis of cysteine rich peptide venom components.</title>
        <authorList>
            <person name="Ueberheide B.M."/>
            <person name="Fenyo D."/>
            <person name="Alewood P.F."/>
            <person name="Chait B.T."/>
        </authorList>
    </citation>
    <scope>PROTEIN SEQUENCE OF 50-60</scope>
    <scope>SUBCELLULAR LOCATION</scope>
    <scope>MASS SPECTROMETRY</scope>
    <scope>OXIDATION AT MET-55</scope>
    <scope>AMIDATION AT SER-60</scope>
    <source>
        <tissue>Venom</tissue>
    </source>
</reference>
<reference key="3">
    <citation type="journal article" date="2012" name="J. Proteome Res.">
        <title>Constrained de novo sequencing of conotoxins.</title>
        <authorList>
            <person name="Bhatia S."/>
            <person name="Kil Y.J."/>
            <person name="Ueberheide B."/>
            <person name="Chait B.T."/>
            <person name="Tayo L."/>
            <person name="Cruz L."/>
            <person name="Lu B."/>
            <person name="Yates J.R. III"/>
            <person name="Bern M."/>
        </authorList>
    </citation>
    <scope>IDENTIFICATION BY MASS SPECTROMETRY</scope>
    <scope>SUBCELLULAR LOCATION</scope>
    <scope>AMIDATION AT SER-60</scope>
    <source>
        <tissue>Venom</tissue>
    </source>
</reference>
<reference key="4">
    <citation type="journal article" date="2012" name="Toxicon">
        <title>Secretion and maturation of conotoxins in the venom ducts of Conus textile.</title>
        <authorList>
            <person name="Dobson R."/>
            <person name="Collodoro M."/>
            <person name="Gilles N."/>
            <person name="Turtoi A."/>
            <person name="De Pauw E."/>
            <person name="Quinton L."/>
        </authorList>
    </citation>
    <scope>IDENTIFICATION BY MASS SPECTROMETRY</scope>
    <scope>TISSUE SPECIFICITY</scope>
    <scope>POSITION IN VENOM DUCT</scope>
    <scope>AMIDATION AT SER-60</scope>
    <source>
        <tissue>Venom</tissue>
    </source>
</reference>
<proteinExistence type="evidence at protein level"/>
<dbReference type="EMBL" id="DQ141164">
    <property type="protein sequence ID" value="AAZ85411.1"/>
    <property type="molecule type" value="mRNA"/>
</dbReference>
<dbReference type="ConoServer" id="1682">
    <property type="toxin name" value="TeAr151 precursor"/>
</dbReference>
<dbReference type="GO" id="GO:0005576">
    <property type="term" value="C:extracellular region"/>
    <property type="evidence" value="ECO:0007669"/>
    <property type="project" value="UniProtKB-SubCell"/>
</dbReference>
<dbReference type="GO" id="GO:0090729">
    <property type="term" value="F:toxin activity"/>
    <property type="evidence" value="ECO:0007669"/>
    <property type="project" value="UniProtKB-KW"/>
</dbReference>
<dbReference type="InterPro" id="IPR031565">
    <property type="entry name" value="T-conotoxin"/>
</dbReference>
<dbReference type="Pfam" id="PF16981">
    <property type="entry name" value="Chi-conotoxin"/>
    <property type="match status" value="1"/>
</dbReference>
<sequence>MRCLPVFVVLLLLIASAPSVDAQPKTKDDVPLAPLHDNIQNTLQTLRKKVCCRPMQDCCSGK</sequence>